<comment type="function">
    <text evidence="1">Catalyzes the oxidation of either pyridoxine 5'-phosphate (PNP) or pyridoxamine 5'-phosphate (PMP) into pyridoxal 5'-phosphate (PLP).</text>
</comment>
<comment type="catalytic activity">
    <reaction evidence="1">
        <text>pyridoxamine 5'-phosphate + O2 + H2O = pyridoxal 5'-phosphate + H2O2 + NH4(+)</text>
        <dbReference type="Rhea" id="RHEA:15817"/>
        <dbReference type="ChEBI" id="CHEBI:15377"/>
        <dbReference type="ChEBI" id="CHEBI:15379"/>
        <dbReference type="ChEBI" id="CHEBI:16240"/>
        <dbReference type="ChEBI" id="CHEBI:28938"/>
        <dbReference type="ChEBI" id="CHEBI:58451"/>
        <dbReference type="ChEBI" id="CHEBI:597326"/>
        <dbReference type="EC" id="1.4.3.5"/>
    </reaction>
</comment>
<comment type="catalytic activity">
    <reaction evidence="1">
        <text>pyridoxine 5'-phosphate + O2 = pyridoxal 5'-phosphate + H2O2</text>
        <dbReference type="Rhea" id="RHEA:15149"/>
        <dbReference type="ChEBI" id="CHEBI:15379"/>
        <dbReference type="ChEBI" id="CHEBI:16240"/>
        <dbReference type="ChEBI" id="CHEBI:58589"/>
        <dbReference type="ChEBI" id="CHEBI:597326"/>
        <dbReference type="EC" id="1.4.3.5"/>
    </reaction>
</comment>
<comment type="cofactor">
    <cofactor evidence="1">
        <name>FMN</name>
        <dbReference type="ChEBI" id="CHEBI:58210"/>
    </cofactor>
    <text evidence="1">Binds 1 FMN per subunit.</text>
</comment>
<comment type="pathway">
    <text evidence="1">Cofactor metabolism; pyridoxal 5'-phosphate salvage; pyridoxal 5'-phosphate from pyridoxamine 5'-phosphate: step 1/1.</text>
</comment>
<comment type="pathway">
    <text evidence="1">Cofactor metabolism; pyridoxal 5'-phosphate salvage; pyridoxal 5'-phosphate from pyridoxine 5'-phosphate: step 1/1.</text>
</comment>
<comment type="subunit">
    <text evidence="1">Homodimer.</text>
</comment>
<comment type="similarity">
    <text evidence="1">Belongs to the pyridoxamine 5'-phosphate oxidase family.</text>
</comment>
<accession>B7L5J1</accession>
<feature type="chain" id="PRO_1000186306" description="Pyridoxine/pyridoxamine 5'-phosphate oxidase">
    <location>
        <begin position="1"/>
        <end position="218"/>
    </location>
</feature>
<feature type="binding site" evidence="1">
    <location>
        <begin position="14"/>
        <end position="17"/>
    </location>
    <ligand>
        <name>substrate</name>
    </ligand>
</feature>
<feature type="binding site" evidence="1">
    <location>
        <begin position="67"/>
        <end position="72"/>
    </location>
    <ligand>
        <name>FMN</name>
        <dbReference type="ChEBI" id="CHEBI:58210"/>
    </ligand>
</feature>
<feature type="binding site" evidence="1">
    <location>
        <position position="72"/>
    </location>
    <ligand>
        <name>substrate</name>
    </ligand>
</feature>
<feature type="binding site" evidence="1">
    <location>
        <begin position="82"/>
        <end position="83"/>
    </location>
    <ligand>
        <name>FMN</name>
        <dbReference type="ChEBI" id="CHEBI:58210"/>
    </ligand>
</feature>
<feature type="binding site" evidence="1">
    <location>
        <position position="88"/>
    </location>
    <ligand>
        <name>FMN</name>
        <dbReference type="ChEBI" id="CHEBI:58210"/>
    </ligand>
</feature>
<feature type="binding site" evidence="1">
    <location>
        <position position="89"/>
    </location>
    <ligand>
        <name>FMN</name>
        <dbReference type="ChEBI" id="CHEBI:58210"/>
    </ligand>
</feature>
<feature type="binding site" evidence="1">
    <location>
        <position position="111"/>
    </location>
    <ligand>
        <name>FMN</name>
        <dbReference type="ChEBI" id="CHEBI:58210"/>
    </ligand>
</feature>
<feature type="binding site" evidence="1">
    <location>
        <position position="129"/>
    </location>
    <ligand>
        <name>substrate</name>
    </ligand>
</feature>
<feature type="binding site" evidence="1">
    <location>
        <position position="133"/>
    </location>
    <ligand>
        <name>substrate</name>
    </ligand>
</feature>
<feature type="binding site" evidence="1">
    <location>
        <position position="137"/>
    </location>
    <ligand>
        <name>substrate</name>
    </ligand>
</feature>
<feature type="binding site" evidence="1">
    <location>
        <begin position="146"/>
        <end position="147"/>
    </location>
    <ligand>
        <name>FMN</name>
        <dbReference type="ChEBI" id="CHEBI:58210"/>
    </ligand>
</feature>
<feature type="binding site" evidence="1">
    <location>
        <position position="191"/>
    </location>
    <ligand>
        <name>FMN</name>
        <dbReference type="ChEBI" id="CHEBI:58210"/>
    </ligand>
</feature>
<feature type="binding site" evidence="1">
    <location>
        <begin position="197"/>
        <end position="199"/>
    </location>
    <ligand>
        <name>substrate</name>
    </ligand>
</feature>
<feature type="binding site" evidence="1">
    <location>
        <position position="201"/>
    </location>
    <ligand>
        <name>FMN</name>
        <dbReference type="ChEBI" id="CHEBI:58210"/>
    </ligand>
</feature>
<evidence type="ECO:0000255" key="1">
    <source>
        <dbReference type="HAMAP-Rule" id="MF_01629"/>
    </source>
</evidence>
<dbReference type="EC" id="1.4.3.5" evidence="1"/>
<dbReference type="EMBL" id="CU928145">
    <property type="protein sequence ID" value="CAU97662.1"/>
    <property type="molecule type" value="Genomic_DNA"/>
</dbReference>
<dbReference type="RefSeq" id="WP_001282313.1">
    <property type="nucleotide sequence ID" value="NC_011748.1"/>
</dbReference>
<dbReference type="SMR" id="B7L5J1"/>
<dbReference type="GeneID" id="93775792"/>
<dbReference type="KEGG" id="eck:EC55989_1806"/>
<dbReference type="HOGENOM" id="CLU_032263_2_2_6"/>
<dbReference type="UniPathway" id="UPA01068">
    <property type="reaction ID" value="UER00304"/>
</dbReference>
<dbReference type="UniPathway" id="UPA01068">
    <property type="reaction ID" value="UER00305"/>
</dbReference>
<dbReference type="Proteomes" id="UP000000746">
    <property type="component" value="Chromosome"/>
</dbReference>
<dbReference type="GO" id="GO:0010181">
    <property type="term" value="F:FMN binding"/>
    <property type="evidence" value="ECO:0007669"/>
    <property type="project" value="UniProtKB-UniRule"/>
</dbReference>
<dbReference type="GO" id="GO:0004733">
    <property type="term" value="F:pyridoxamine phosphate oxidase activity"/>
    <property type="evidence" value="ECO:0007669"/>
    <property type="project" value="UniProtKB-UniRule"/>
</dbReference>
<dbReference type="GO" id="GO:0008615">
    <property type="term" value="P:pyridoxine biosynthetic process"/>
    <property type="evidence" value="ECO:0007669"/>
    <property type="project" value="UniProtKB-KW"/>
</dbReference>
<dbReference type="FunFam" id="2.30.110.10:FF:000001">
    <property type="entry name" value="Pyridoxine/pyridoxamine 5'-phosphate oxidase"/>
    <property type="match status" value="1"/>
</dbReference>
<dbReference type="Gene3D" id="2.30.110.10">
    <property type="entry name" value="Electron Transport, Fmn-binding Protein, Chain A"/>
    <property type="match status" value="1"/>
</dbReference>
<dbReference type="HAMAP" id="MF_01629">
    <property type="entry name" value="PdxH"/>
    <property type="match status" value="1"/>
</dbReference>
<dbReference type="InterPro" id="IPR000659">
    <property type="entry name" value="Pyridox_Oxase"/>
</dbReference>
<dbReference type="InterPro" id="IPR019740">
    <property type="entry name" value="Pyridox_Oxase_CS"/>
</dbReference>
<dbReference type="InterPro" id="IPR011576">
    <property type="entry name" value="Pyridox_Oxase_N"/>
</dbReference>
<dbReference type="InterPro" id="IPR019576">
    <property type="entry name" value="Pyridoxamine_oxidase_dimer_C"/>
</dbReference>
<dbReference type="InterPro" id="IPR012349">
    <property type="entry name" value="Split_barrel_FMN-bd"/>
</dbReference>
<dbReference type="NCBIfam" id="TIGR00558">
    <property type="entry name" value="pdxH"/>
    <property type="match status" value="1"/>
</dbReference>
<dbReference type="NCBIfam" id="NF004231">
    <property type="entry name" value="PRK05679.1"/>
    <property type="match status" value="1"/>
</dbReference>
<dbReference type="PANTHER" id="PTHR10851:SF0">
    <property type="entry name" value="PYRIDOXINE-5'-PHOSPHATE OXIDASE"/>
    <property type="match status" value="1"/>
</dbReference>
<dbReference type="PANTHER" id="PTHR10851">
    <property type="entry name" value="PYRIDOXINE-5-PHOSPHATE OXIDASE"/>
    <property type="match status" value="1"/>
</dbReference>
<dbReference type="Pfam" id="PF10590">
    <property type="entry name" value="PNP_phzG_C"/>
    <property type="match status" value="1"/>
</dbReference>
<dbReference type="Pfam" id="PF01243">
    <property type="entry name" value="PNPOx_N"/>
    <property type="match status" value="1"/>
</dbReference>
<dbReference type="PIRSF" id="PIRSF000190">
    <property type="entry name" value="Pyd_amn-ph_oxd"/>
    <property type="match status" value="1"/>
</dbReference>
<dbReference type="SUPFAM" id="SSF50475">
    <property type="entry name" value="FMN-binding split barrel"/>
    <property type="match status" value="1"/>
</dbReference>
<dbReference type="PROSITE" id="PS01064">
    <property type="entry name" value="PYRIDOX_OXIDASE"/>
    <property type="match status" value="1"/>
</dbReference>
<reference key="1">
    <citation type="journal article" date="2009" name="PLoS Genet.">
        <title>Organised genome dynamics in the Escherichia coli species results in highly diverse adaptive paths.</title>
        <authorList>
            <person name="Touchon M."/>
            <person name="Hoede C."/>
            <person name="Tenaillon O."/>
            <person name="Barbe V."/>
            <person name="Baeriswyl S."/>
            <person name="Bidet P."/>
            <person name="Bingen E."/>
            <person name="Bonacorsi S."/>
            <person name="Bouchier C."/>
            <person name="Bouvet O."/>
            <person name="Calteau A."/>
            <person name="Chiapello H."/>
            <person name="Clermont O."/>
            <person name="Cruveiller S."/>
            <person name="Danchin A."/>
            <person name="Diard M."/>
            <person name="Dossat C."/>
            <person name="Karoui M.E."/>
            <person name="Frapy E."/>
            <person name="Garry L."/>
            <person name="Ghigo J.M."/>
            <person name="Gilles A.M."/>
            <person name="Johnson J."/>
            <person name="Le Bouguenec C."/>
            <person name="Lescat M."/>
            <person name="Mangenot S."/>
            <person name="Martinez-Jehanne V."/>
            <person name="Matic I."/>
            <person name="Nassif X."/>
            <person name="Oztas S."/>
            <person name="Petit M.A."/>
            <person name="Pichon C."/>
            <person name="Rouy Z."/>
            <person name="Ruf C.S."/>
            <person name="Schneider D."/>
            <person name="Tourret J."/>
            <person name="Vacherie B."/>
            <person name="Vallenet D."/>
            <person name="Medigue C."/>
            <person name="Rocha E.P.C."/>
            <person name="Denamur E."/>
        </authorList>
    </citation>
    <scope>NUCLEOTIDE SEQUENCE [LARGE SCALE GENOMIC DNA]</scope>
    <source>
        <strain>55989 / EAEC</strain>
    </source>
</reference>
<keyword id="KW-0285">Flavoprotein</keyword>
<keyword id="KW-0288">FMN</keyword>
<keyword id="KW-0560">Oxidoreductase</keyword>
<keyword id="KW-0664">Pyridoxine biosynthesis</keyword>
<keyword id="KW-1185">Reference proteome</keyword>
<proteinExistence type="inferred from homology"/>
<sequence length="218" mass="25559">MSDNDELQQIAHLRREYTKGGLRRRDLPADPLTLFERWLSQACEAKLADPTAMVVATVDEHAQPYQRIVLLKHYDEKGMVFYTNLGSRKAHQIENNPRVSLLFPWHTLERQVMVIGKAERLSTLEVMKYFHSRPRDSQIGAWVSKQSSRISARGILESKFLELKQKFQQGEVPLPSFWGGFRVSLEQIEFWQGGEHRLHDRFLYQRENDAWKIDRLAP</sequence>
<protein>
    <recommendedName>
        <fullName evidence="1">Pyridoxine/pyridoxamine 5'-phosphate oxidase</fullName>
        <ecNumber evidence="1">1.4.3.5</ecNumber>
    </recommendedName>
    <alternativeName>
        <fullName evidence="1">PNP/PMP oxidase</fullName>
        <shortName evidence="1">PNPOx</shortName>
    </alternativeName>
    <alternativeName>
        <fullName evidence="1">Pyridoxal 5'-phosphate synthase</fullName>
    </alternativeName>
</protein>
<name>PDXH_ECO55</name>
<gene>
    <name evidence="1" type="primary">pdxH</name>
    <name type="ordered locus">EC55989_1806</name>
</gene>
<organism>
    <name type="scientific">Escherichia coli (strain 55989 / EAEC)</name>
    <dbReference type="NCBI Taxonomy" id="585055"/>
    <lineage>
        <taxon>Bacteria</taxon>
        <taxon>Pseudomonadati</taxon>
        <taxon>Pseudomonadota</taxon>
        <taxon>Gammaproteobacteria</taxon>
        <taxon>Enterobacterales</taxon>
        <taxon>Enterobacteriaceae</taxon>
        <taxon>Escherichia</taxon>
    </lineage>
</organism>